<name>PUR5_XYLFA</name>
<sequence>MTTLTSPSTTPLTYRDAGVDIDAGNTLVERIKPLVKRSFRPEVMSGLGGFGALFNLAGKYKEPVLVSGTDGVGTKLKLAQQLNRHNTIGIDLVAMCVNDVLVQGAEPLFFLDYFATGKLDIDTATAVISGIALGCEQSGCALIGGETAEMPDMYPPGEYDLAGFCVAAVEKSQLLDGSQVREGDVLIGIASSGPHSNGYSLIRRIYERAGSPADLDIHGTRLIDTLMAPTTLYVKPILKLLHTHSDAIHAMAHITGGGLTENIIRVIPPNLGLRIDANAWTQPPVFQWLQSEGALADTEMWRTFNCGIGFVLVATPNQVAPLGQALDNQGLAHWQIGRVFTPVGNERVHIG</sequence>
<keyword id="KW-0067">ATP-binding</keyword>
<keyword id="KW-0963">Cytoplasm</keyword>
<keyword id="KW-0436">Ligase</keyword>
<keyword id="KW-0547">Nucleotide-binding</keyword>
<keyword id="KW-0658">Purine biosynthesis</keyword>
<gene>
    <name evidence="1" type="primary">purM</name>
    <name type="ordered locus">XF_0587</name>
</gene>
<organism>
    <name type="scientific">Xylella fastidiosa (strain 9a5c)</name>
    <dbReference type="NCBI Taxonomy" id="160492"/>
    <lineage>
        <taxon>Bacteria</taxon>
        <taxon>Pseudomonadati</taxon>
        <taxon>Pseudomonadota</taxon>
        <taxon>Gammaproteobacteria</taxon>
        <taxon>Lysobacterales</taxon>
        <taxon>Lysobacteraceae</taxon>
        <taxon>Xylella</taxon>
    </lineage>
</organism>
<accession>Q9PFS0</accession>
<protein>
    <recommendedName>
        <fullName evidence="1">Phosphoribosylformylglycinamidine cyclo-ligase</fullName>
        <ecNumber evidence="1">6.3.3.1</ecNumber>
    </recommendedName>
    <alternativeName>
        <fullName evidence="1">AIR synthase</fullName>
    </alternativeName>
    <alternativeName>
        <fullName evidence="1">AIRS</fullName>
    </alternativeName>
    <alternativeName>
        <fullName evidence="1">Phosphoribosyl-aminoimidazole synthetase</fullName>
    </alternativeName>
</protein>
<proteinExistence type="inferred from homology"/>
<comment type="catalytic activity">
    <reaction evidence="1">
        <text>2-formamido-N(1)-(5-O-phospho-beta-D-ribosyl)acetamidine + ATP = 5-amino-1-(5-phospho-beta-D-ribosyl)imidazole + ADP + phosphate + H(+)</text>
        <dbReference type="Rhea" id="RHEA:23032"/>
        <dbReference type="ChEBI" id="CHEBI:15378"/>
        <dbReference type="ChEBI" id="CHEBI:30616"/>
        <dbReference type="ChEBI" id="CHEBI:43474"/>
        <dbReference type="ChEBI" id="CHEBI:137981"/>
        <dbReference type="ChEBI" id="CHEBI:147287"/>
        <dbReference type="ChEBI" id="CHEBI:456216"/>
        <dbReference type="EC" id="6.3.3.1"/>
    </reaction>
</comment>
<comment type="pathway">
    <text evidence="1">Purine metabolism; IMP biosynthesis via de novo pathway; 5-amino-1-(5-phospho-D-ribosyl)imidazole from N(2)-formyl-N(1)-(5-phospho-D-ribosyl)glycinamide: step 2/2.</text>
</comment>
<comment type="subcellular location">
    <subcellularLocation>
        <location evidence="1">Cytoplasm</location>
    </subcellularLocation>
</comment>
<comment type="similarity">
    <text evidence="1">Belongs to the AIR synthase family.</text>
</comment>
<feature type="chain" id="PRO_0000148276" description="Phosphoribosylformylglycinamidine cyclo-ligase">
    <location>
        <begin position="1"/>
        <end position="351"/>
    </location>
</feature>
<evidence type="ECO:0000255" key="1">
    <source>
        <dbReference type="HAMAP-Rule" id="MF_00741"/>
    </source>
</evidence>
<reference key="1">
    <citation type="journal article" date="2000" name="Nature">
        <title>The genome sequence of the plant pathogen Xylella fastidiosa.</title>
        <authorList>
            <person name="Simpson A.J.G."/>
            <person name="Reinach F.C."/>
            <person name="Arruda P."/>
            <person name="Abreu F.A."/>
            <person name="Acencio M."/>
            <person name="Alvarenga R."/>
            <person name="Alves L.M.C."/>
            <person name="Araya J.E."/>
            <person name="Baia G.S."/>
            <person name="Baptista C.S."/>
            <person name="Barros M.H."/>
            <person name="Bonaccorsi E.D."/>
            <person name="Bordin S."/>
            <person name="Bove J.M."/>
            <person name="Briones M.R.S."/>
            <person name="Bueno M.R.P."/>
            <person name="Camargo A.A."/>
            <person name="Camargo L.E.A."/>
            <person name="Carraro D.M."/>
            <person name="Carrer H."/>
            <person name="Colauto N.B."/>
            <person name="Colombo C."/>
            <person name="Costa F.F."/>
            <person name="Costa M.C.R."/>
            <person name="Costa-Neto C.M."/>
            <person name="Coutinho L.L."/>
            <person name="Cristofani M."/>
            <person name="Dias-Neto E."/>
            <person name="Docena C."/>
            <person name="El-Dorry H."/>
            <person name="Facincani A.P."/>
            <person name="Ferreira A.J.S."/>
            <person name="Ferreira V.C.A."/>
            <person name="Ferro J.A."/>
            <person name="Fraga J.S."/>
            <person name="Franca S.C."/>
            <person name="Franco M.C."/>
            <person name="Frohme M."/>
            <person name="Furlan L.R."/>
            <person name="Garnier M."/>
            <person name="Goldman G.H."/>
            <person name="Goldman M.H.S."/>
            <person name="Gomes S.L."/>
            <person name="Gruber A."/>
            <person name="Ho P.L."/>
            <person name="Hoheisel J.D."/>
            <person name="Junqueira M.L."/>
            <person name="Kemper E.L."/>
            <person name="Kitajima J.P."/>
            <person name="Krieger J.E."/>
            <person name="Kuramae E.E."/>
            <person name="Laigret F."/>
            <person name="Lambais M.R."/>
            <person name="Leite L.C.C."/>
            <person name="Lemos E.G.M."/>
            <person name="Lemos M.V.F."/>
            <person name="Lopes S.A."/>
            <person name="Lopes C.R."/>
            <person name="Machado J.A."/>
            <person name="Machado M.A."/>
            <person name="Madeira A.M.B.N."/>
            <person name="Madeira H.M.F."/>
            <person name="Marino C.L."/>
            <person name="Marques M.V."/>
            <person name="Martins E.A.L."/>
            <person name="Martins E.M.F."/>
            <person name="Matsukuma A.Y."/>
            <person name="Menck C.F.M."/>
            <person name="Miracca E.C."/>
            <person name="Miyaki C.Y."/>
            <person name="Monteiro-Vitorello C.B."/>
            <person name="Moon D.H."/>
            <person name="Nagai M.A."/>
            <person name="Nascimento A.L.T.O."/>
            <person name="Netto L.E.S."/>
            <person name="Nhani A. Jr."/>
            <person name="Nobrega F.G."/>
            <person name="Nunes L.R."/>
            <person name="Oliveira M.A."/>
            <person name="de Oliveira M.C."/>
            <person name="de Oliveira R.C."/>
            <person name="Palmieri D.A."/>
            <person name="Paris A."/>
            <person name="Peixoto B.R."/>
            <person name="Pereira G.A.G."/>
            <person name="Pereira H.A. Jr."/>
            <person name="Pesquero J.B."/>
            <person name="Quaggio R.B."/>
            <person name="Roberto P.G."/>
            <person name="Rodrigues V."/>
            <person name="de Rosa A.J.M."/>
            <person name="de Rosa V.E. Jr."/>
            <person name="de Sa R.G."/>
            <person name="Santelli R.V."/>
            <person name="Sawasaki H.E."/>
            <person name="da Silva A.C.R."/>
            <person name="da Silva A.M."/>
            <person name="da Silva F.R."/>
            <person name="Silva W.A. Jr."/>
            <person name="da Silveira J.F."/>
            <person name="Silvestri M.L.Z."/>
            <person name="Siqueira W.J."/>
            <person name="de Souza A.A."/>
            <person name="de Souza A.P."/>
            <person name="Terenzi M.F."/>
            <person name="Truffi D."/>
            <person name="Tsai S.M."/>
            <person name="Tsuhako M.H."/>
            <person name="Vallada H."/>
            <person name="Van Sluys M.A."/>
            <person name="Verjovski-Almeida S."/>
            <person name="Vettore A.L."/>
            <person name="Zago M.A."/>
            <person name="Zatz M."/>
            <person name="Meidanis J."/>
            <person name="Setubal J.C."/>
        </authorList>
    </citation>
    <scope>NUCLEOTIDE SEQUENCE [LARGE SCALE GENOMIC DNA]</scope>
    <source>
        <strain>9a5c</strain>
    </source>
</reference>
<dbReference type="EC" id="6.3.3.1" evidence="1"/>
<dbReference type="EMBL" id="AE003849">
    <property type="protein sequence ID" value="AAF83397.1"/>
    <property type="molecule type" value="Genomic_DNA"/>
</dbReference>
<dbReference type="PIR" id="E82789">
    <property type="entry name" value="E82789"/>
</dbReference>
<dbReference type="RefSeq" id="WP_010893113.1">
    <property type="nucleotide sequence ID" value="NC_002488.3"/>
</dbReference>
<dbReference type="SMR" id="Q9PFS0"/>
<dbReference type="STRING" id="160492.XF_0587"/>
<dbReference type="KEGG" id="xfa:XF_0587"/>
<dbReference type="PATRIC" id="fig|160492.11.peg.627"/>
<dbReference type="eggNOG" id="COG0150">
    <property type="taxonomic scope" value="Bacteria"/>
</dbReference>
<dbReference type="HOGENOM" id="CLU_047116_0_0_6"/>
<dbReference type="UniPathway" id="UPA00074">
    <property type="reaction ID" value="UER00129"/>
</dbReference>
<dbReference type="Proteomes" id="UP000000812">
    <property type="component" value="Chromosome"/>
</dbReference>
<dbReference type="GO" id="GO:0005829">
    <property type="term" value="C:cytosol"/>
    <property type="evidence" value="ECO:0007669"/>
    <property type="project" value="TreeGrafter"/>
</dbReference>
<dbReference type="GO" id="GO:0005524">
    <property type="term" value="F:ATP binding"/>
    <property type="evidence" value="ECO:0007669"/>
    <property type="project" value="UniProtKB-KW"/>
</dbReference>
<dbReference type="GO" id="GO:0004637">
    <property type="term" value="F:phosphoribosylamine-glycine ligase activity"/>
    <property type="evidence" value="ECO:0007669"/>
    <property type="project" value="TreeGrafter"/>
</dbReference>
<dbReference type="GO" id="GO:0004641">
    <property type="term" value="F:phosphoribosylformylglycinamidine cyclo-ligase activity"/>
    <property type="evidence" value="ECO:0007669"/>
    <property type="project" value="UniProtKB-UniRule"/>
</dbReference>
<dbReference type="GO" id="GO:0006189">
    <property type="term" value="P:'de novo' IMP biosynthetic process"/>
    <property type="evidence" value="ECO:0007669"/>
    <property type="project" value="UniProtKB-UniRule"/>
</dbReference>
<dbReference type="GO" id="GO:0046084">
    <property type="term" value="P:adenine biosynthetic process"/>
    <property type="evidence" value="ECO:0007669"/>
    <property type="project" value="TreeGrafter"/>
</dbReference>
<dbReference type="CDD" id="cd02196">
    <property type="entry name" value="PurM"/>
    <property type="match status" value="1"/>
</dbReference>
<dbReference type="FunFam" id="3.30.1330.10:FF:000001">
    <property type="entry name" value="Phosphoribosylformylglycinamidine cyclo-ligase"/>
    <property type="match status" value="1"/>
</dbReference>
<dbReference type="FunFam" id="3.90.650.10:FF:000001">
    <property type="entry name" value="Phosphoribosylformylglycinamidine cyclo-ligase"/>
    <property type="match status" value="1"/>
</dbReference>
<dbReference type="Gene3D" id="3.90.650.10">
    <property type="entry name" value="PurM-like C-terminal domain"/>
    <property type="match status" value="1"/>
</dbReference>
<dbReference type="Gene3D" id="3.30.1330.10">
    <property type="entry name" value="PurM-like, N-terminal domain"/>
    <property type="match status" value="1"/>
</dbReference>
<dbReference type="HAMAP" id="MF_00741">
    <property type="entry name" value="AIRS"/>
    <property type="match status" value="1"/>
</dbReference>
<dbReference type="InterPro" id="IPR010918">
    <property type="entry name" value="PurM-like_C_dom"/>
</dbReference>
<dbReference type="InterPro" id="IPR036676">
    <property type="entry name" value="PurM-like_C_sf"/>
</dbReference>
<dbReference type="InterPro" id="IPR016188">
    <property type="entry name" value="PurM-like_N"/>
</dbReference>
<dbReference type="InterPro" id="IPR036921">
    <property type="entry name" value="PurM-like_N_sf"/>
</dbReference>
<dbReference type="InterPro" id="IPR004733">
    <property type="entry name" value="PurM_cligase"/>
</dbReference>
<dbReference type="NCBIfam" id="TIGR00878">
    <property type="entry name" value="purM"/>
    <property type="match status" value="1"/>
</dbReference>
<dbReference type="PANTHER" id="PTHR10520:SF12">
    <property type="entry name" value="TRIFUNCTIONAL PURINE BIOSYNTHETIC PROTEIN ADENOSINE-3"/>
    <property type="match status" value="1"/>
</dbReference>
<dbReference type="PANTHER" id="PTHR10520">
    <property type="entry name" value="TRIFUNCTIONAL PURINE BIOSYNTHETIC PROTEIN ADENOSINE-3-RELATED"/>
    <property type="match status" value="1"/>
</dbReference>
<dbReference type="Pfam" id="PF00586">
    <property type="entry name" value="AIRS"/>
    <property type="match status" value="1"/>
</dbReference>
<dbReference type="Pfam" id="PF02769">
    <property type="entry name" value="AIRS_C"/>
    <property type="match status" value="1"/>
</dbReference>
<dbReference type="SUPFAM" id="SSF56042">
    <property type="entry name" value="PurM C-terminal domain-like"/>
    <property type="match status" value="1"/>
</dbReference>
<dbReference type="SUPFAM" id="SSF55326">
    <property type="entry name" value="PurM N-terminal domain-like"/>
    <property type="match status" value="1"/>
</dbReference>